<geneLocation type="chloroplast"/>
<reference key="1">
    <citation type="submission" date="2003-11" db="EMBL/GenBank/DDBJ databases">
        <title>Whole genome sequence of Porphyra yezoensis chloroplast.</title>
        <authorList>
            <person name="Kunimoto M."/>
            <person name="Morishima K."/>
            <person name="Yoshikawa M."/>
            <person name="Fukuda S."/>
            <person name="Kobayashi T."/>
            <person name="Kobayashi M."/>
            <person name="Okazaki T."/>
            <person name="Ohara I."/>
            <person name="Nakayama I."/>
        </authorList>
    </citation>
    <scope>NUCLEOTIDE SEQUENCE [LARGE SCALE GENOMIC DNA]</scope>
    <source>
        <strain>U-51</strain>
    </source>
</reference>
<feature type="chain" id="PRO_0000275571" description="Cytochrome b6-f complex subunit 8">
    <location>
        <begin position="1"/>
        <end position="29"/>
    </location>
</feature>
<feature type="transmembrane region" description="Helical" evidence="1">
    <location>
        <begin position="3"/>
        <end position="23"/>
    </location>
</feature>
<keyword id="KW-0150">Chloroplast</keyword>
<keyword id="KW-0249">Electron transport</keyword>
<keyword id="KW-0472">Membrane</keyword>
<keyword id="KW-0602">Photosynthesis</keyword>
<keyword id="KW-0934">Plastid</keyword>
<keyword id="KW-0793">Thylakoid</keyword>
<keyword id="KW-0812">Transmembrane</keyword>
<keyword id="KW-1133">Transmembrane helix</keyword>
<keyword id="KW-0813">Transport</keyword>
<gene>
    <name evidence="1" type="primary">petN</name>
</gene>
<name>PETN_PYRYE</name>
<proteinExistence type="inferred from homology"/>
<evidence type="ECO:0000255" key="1">
    <source>
        <dbReference type="HAMAP-Rule" id="MF_00395"/>
    </source>
</evidence>
<dbReference type="EMBL" id="AP006715">
    <property type="protein sequence ID" value="BAE92401.1"/>
    <property type="molecule type" value="Genomic_DNA"/>
</dbReference>
<dbReference type="RefSeq" id="YP_536958.1">
    <property type="nucleotide sequence ID" value="NC_007932.1"/>
</dbReference>
<dbReference type="SMR" id="Q1XDL0"/>
<dbReference type="GeneID" id="3978977"/>
<dbReference type="GO" id="GO:0009535">
    <property type="term" value="C:chloroplast thylakoid membrane"/>
    <property type="evidence" value="ECO:0007669"/>
    <property type="project" value="UniProtKB-SubCell"/>
</dbReference>
<dbReference type="GO" id="GO:0009512">
    <property type="term" value="C:cytochrome b6f complex"/>
    <property type="evidence" value="ECO:0007669"/>
    <property type="project" value="InterPro"/>
</dbReference>
<dbReference type="GO" id="GO:0045158">
    <property type="term" value="F:electron transporter, transferring electrons within cytochrome b6/f complex of photosystem II activity"/>
    <property type="evidence" value="ECO:0007669"/>
    <property type="project" value="InterPro"/>
</dbReference>
<dbReference type="GO" id="GO:0017004">
    <property type="term" value="P:cytochrome complex assembly"/>
    <property type="evidence" value="ECO:0007669"/>
    <property type="project" value="UniProtKB-UniRule"/>
</dbReference>
<dbReference type="GO" id="GO:0015979">
    <property type="term" value="P:photosynthesis"/>
    <property type="evidence" value="ECO:0007669"/>
    <property type="project" value="UniProtKB-KW"/>
</dbReference>
<dbReference type="HAMAP" id="MF_00395">
    <property type="entry name" value="Cytb6_f_PetN"/>
    <property type="match status" value="1"/>
</dbReference>
<dbReference type="InterPro" id="IPR036143">
    <property type="entry name" value="Cytochr_b6-f_cplx_su8_sf"/>
</dbReference>
<dbReference type="InterPro" id="IPR005497">
    <property type="entry name" value="Cytochrome_b6-f_cplx_su8"/>
</dbReference>
<dbReference type="NCBIfam" id="NF011331">
    <property type="entry name" value="PRK14747.1"/>
    <property type="match status" value="1"/>
</dbReference>
<dbReference type="Pfam" id="PF03742">
    <property type="entry name" value="PetN"/>
    <property type="match status" value="1"/>
</dbReference>
<dbReference type="SUPFAM" id="SSF103451">
    <property type="entry name" value="PetN subunit of the cytochrome b6f complex"/>
    <property type="match status" value="1"/>
</dbReference>
<organism>
    <name type="scientific">Pyropia yezoensis</name>
    <name type="common">Susabi-nori</name>
    <name type="synonym">Porphyra yezoensis</name>
    <dbReference type="NCBI Taxonomy" id="2788"/>
    <lineage>
        <taxon>Eukaryota</taxon>
        <taxon>Rhodophyta</taxon>
        <taxon>Bangiophyceae</taxon>
        <taxon>Bangiales</taxon>
        <taxon>Bangiaceae</taxon>
        <taxon>Pyropia</taxon>
    </lineage>
</organism>
<accession>Q1XDL0</accession>
<protein>
    <recommendedName>
        <fullName evidence="1">Cytochrome b6-f complex subunit 8</fullName>
    </recommendedName>
    <alternativeName>
        <fullName evidence="1">Cytochrome b6-f complex subunit PetN</fullName>
    </alternativeName>
    <alternativeName>
        <fullName evidence="1">Cytochrome b6-f complex subunit VIII</fullName>
    </alternativeName>
</protein>
<sequence length="29" mass="3237">MDILSLGWAALMAMFTFSIAMVVWGRNGF</sequence>
<comment type="function">
    <text evidence="1">Component of the cytochrome b6-f complex, which mediates electron transfer between photosystem II (PSII) and photosystem I (PSI), cyclic electron flow around PSI, and state transitions.</text>
</comment>
<comment type="subunit">
    <text evidence="1">The 4 large subunits of the cytochrome b6-f complex are cytochrome b6, subunit IV (17 kDa polypeptide, PetD), cytochrome f and the Rieske protein, while the 4 small subunits are PetG, PetL, PetM and PetN. The complex functions as a dimer.</text>
</comment>
<comment type="subcellular location">
    <subcellularLocation>
        <location>Plastid</location>
        <location>Chloroplast thylakoid membrane</location>
        <topology>Single-pass membrane protein</topology>
    </subcellularLocation>
</comment>
<comment type="similarity">
    <text evidence="1">Belongs to the PetN family.</text>
</comment>